<sequence>MKVFYDKDADLSLIKGKNVTIIGYGSQGHAHALNLKDSGVNVTVGLRKSGASWNKAVNAGLQVKEVAEAVKGADVVMILLPDEQIADVYKNEVHANIKEGAALAFAHGFNVHYGAVIPRADLDVIMIAPKAPGHTVRSTYAQGGGVPHLIAVHQNKSGAARDIALSYATANGGGRAGIIETNFREETETDLFGEQAVLCGGTVELIKAGFETLVEAGYAPEMAYFECLHELKLIVDLIYEGGIANMNYSISNNAEYGEYVTGPRVVTEETKKAMKQCLKDIQTGEYAKSFLLENKAGAPTLISRRRLTAEHQIEEVGGKLRAMMPWIAKNKLVDQSKN</sequence>
<gene>
    <name evidence="1" type="primary">ilvC</name>
    <name type="ordered locus">Rmet_0913</name>
</gene>
<proteinExistence type="inferred from homology"/>
<dbReference type="EC" id="1.1.1.86" evidence="1"/>
<dbReference type="EMBL" id="CP000352">
    <property type="protein sequence ID" value="ABF07799.1"/>
    <property type="molecule type" value="Genomic_DNA"/>
</dbReference>
<dbReference type="RefSeq" id="WP_011515738.1">
    <property type="nucleotide sequence ID" value="NC_007973.1"/>
</dbReference>
<dbReference type="SMR" id="Q1LPX7"/>
<dbReference type="STRING" id="266264.Rmet_0913"/>
<dbReference type="KEGG" id="rme:Rmet_0913"/>
<dbReference type="eggNOG" id="COG0059">
    <property type="taxonomic scope" value="Bacteria"/>
</dbReference>
<dbReference type="HOGENOM" id="CLU_033821_0_1_4"/>
<dbReference type="UniPathway" id="UPA00047">
    <property type="reaction ID" value="UER00056"/>
</dbReference>
<dbReference type="UniPathway" id="UPA00049">
    <property type="reaction ID" value="UER00060"/>
</dbReference>
<dbReference type="Proteomes" id="UP000002429">
    <property type="component" value="Chromosome"/>
</dbReference>
<dbReference type="GO" id="GO:0005829">
    <property type="term" value="C:cytosol"/>
    <property type="evidence" value="ECO:0007669"/>
    <property type="project" value="TreeGrafter"/>
</dbReference>
<dbReference type="GO" id="GO:0004455">
    <property type="term" value="F:ketol-acid reductoisomerase activity"/>
    <property type="evidence" value="ECO:0007669"/>
    <property type="project" value="UniProtKB-UniRule"/>
</dbReference>
<dbReference type="GO" id="GO:0000287">
    <property type="term" value="F:magnesium ion binding"/>
    <property type="evidence" value="ECO:0007669"/>
    <property type="project" value="UniProtKB-UniRule"/>
</dbReference>
<dbReference type="GO" id="GO:0050661">
    <property type="term" value="F:NADP binding"/>
    <property type="evidence" value="ECO:0007669"/>
    <property type="project" value="InterPro"/>
</dbReference>
<dbReference type="GO" id="GO:0009097">
    <property type="term" value="P:isoleucine biosynthetic process"/>
    <property type="evidence" value="ECO:0007669"/>
    <property type="project" value="UniProtKB-UniRule"/>
</dbReference>
<dbReference type="GO" id="GO:0009099">
    <property type="term" value="P:L-valine biosynthetic process"/>
    <property type="evidence" value="ECO:0007669"/>
    <property type="project" value="UniProtKB-UniRule"/>
</dbReference>
<dbReference type="FunFam" id="3.40.50.720:FF:000023">
    <property type="entry name" value="Ketol-acid reductoisomerase (NADP(+))"/>
    <property type="match status" value="1"/>
</dbReference>
<dbReference type="Gene3D" id="6.10.240.10">
    <property type="match status" value="1"/>
</dbReference>
<dbReference type="Gene3D" id="3.40.50.720">
    <property type="entry name" value="NAD(P)-binding Rossmann-like Domain"/>
    <property type="match status" value="1"/>
</dbReference>
<dbReference type="HAMAP" id="MF_00435">
    <property type="entry name" value="IlvC"/>
    <property type="match status" value="1"/>
</dbReference>
<dbReference type="InterPro" id="IPR008927">
    <property type="entry name" value="6-PGluconate_DH-like_C_sf"/>
</dbReference>
<dbReference type="InterPro" id="IPR013023">
    <property type="entry name" value="KARI"/>
</dbReference>
<dbReference type="InterPro" id="IPR000506">
    <property type="entry name" value="KARI_C"/>
</dbReference>
<dbReference type="InterPro" id="IPR013116">
    <property type="entry name" value="KARI_N"/>
</dbReference>
<dbReference type="InterPro" id="IPR014359">
    <property type="entry name" value="KARI_prok"/>
</dbReference>
<dbReference type="InterPro" id="IPR036291">
    <property type="entry name" value="NAD(P)-bd_dom_sf"/>
</dbReference>
<dbReference type="NCBIfam" id="TIGR00465">
    <property type="entry name" value="ilvC"/>
    <property type="match status" value="1"/>
</dbReference>
<dbReference type="NCBIfam" id="NF004017">
    <property type="entry name" value="PRK05479.1"/>
    <property type="match status" value="1"/>
</dbReference>
<dbReference type="NCBIfam" id="NF009940">
    <property type="entry name" value="PRK13403.1"/>
    <property type="match status" value="1"/>
</dbReference>
<dbReference type="PANTHER" id="PTHR21371">
    <property type="entry name" value="KETOL-ACID REDUCTOISOMERASE, MITOCHONDRIAL"/>
    <property type="match status" value="1"/>
</dbReference>
<dbReference type="PANTHER" id="PTHR21371:SF1">
    <property type="entry name" value="KETOL-ACID REDUCTOISOMERASE, MITOCHONDRIAL"/>
    <property type="match status" value="1"/>
</dbReference>
<dbReference type="Pfam" id="PF01450">
    <property type="entry name" value="KARI_C"/>
    <property type="match status" value="1"/>
</dbReference>
<dbReference type="Pfam" id="PF07991">
    <property type="entry name" value="KARI_N"/>
    <property type="match status" value="1"/>
</dbReference>
<dbReference type="PIRSF" id="PIRSF000116">
    <property type="entry name" value="IlvC_gammaproteo"/>
    <property type="match status" value="1"/>
</dbReference>
<dbReference type="SUPFAM" id="SSF48179">
    <property type="entry name" value="6-phosphogluconate dehydrogenase C-terminal domain-like"/>
    <property type="match status" value="1"/>
</dbReference>
<dbReference type="SUPFAM" id="SSF51735">
    <property type="entry name" value="NAD(P)-binding Rossmann-fold domains"/>
    <property type="match status" value="1"/>
</dbReference>
<dbReference type="PROSITE" id="PS51851">
    <property type="entry name" value="KARI_C"/>
    <property type="match status" value="1"/>
</dbReference>
<dbReference type="PROSITE" id="PS51850">
    <property type="entry name" value="KARI_N"/>
    <property type="match status" value="1"/>
</dbReference>
<evidence type="ECO:0000255" key="1">
    <source>
        <dbReference type="HAMAP-Rule" id="MF_00435"/>
    </source>
</evidence>
<evidence type="ECO:0000255" key="2">
    <source>
        <dbReference type="PROSITE-ProRule" id="PRU01197"/>
    </source>
</evidence>
<evidence type="ECO:0000255" key="3">
    <source>
        <dbReference type="PROSITE-ProRule" id="PRU01198"/>
    </source>
</evidence>
<protein>
    <recommendedName>
        <fullName evidence="1">Ketol-acid reductoisomerase (NADP(+))</fullName>
        <shortName evidence="1">KARI</shortName>
        <ecNumber evidence="1">1.1.1.86</ecNumber>
    </recommendedName>
    <alternativeName>
        <fullName evidence="1">Acetohydroxy-acid isomeroreductase</fullName>
        <shortName evidence="1">AHIR</shortName>
    </alternativeName>
    <alternativeName>
        <fullName evidence="1">Alpha-keto-beta-hydroxylacyl reductoisomerase</fullName>
    </alternativeName>
    <alternativeName>
        <fullName evidence="1">Ketol-acid reductoisomerase type 1</fullName>
    </alternativeName>
    <alternativeName>
        <fullName evidence="1">Ketol-acid reductoisomerase type I</fullName>
    </alternativeName>
</protein>
<organism>
    <name type="scientific">Cupriavidus metallidurans (strain ATCC 43123 / DSM 2839 / NBRC 102507 / CH34)</name>
    <name type="common">Ralstonia metallidurans</name>
    <dbReference type="NCBI Taxonomy" id="266264"/>
    <lineage>
        <taxon>Bacteria</taxon>
        <taxon>Pseudomonadati</taxon>
        <taxon>Pseudomonadota</taxon>
        <taxon>Betaproteobacteria</taxon>
        <taxon>Burkholderiales</taxon>
        <taxon>Burkholderiaceae</taxon>
        <taxon>Cupriavidus</taxon>
    </lineage>
</organism>
<reference key="1">
    <citation type="journal article" date="2010" name="PLoS ONE">
        <title>The complete genome sequence of Cupriavidus metallidurans strain CH34, a master survivalist in harsh and anthropogenic environments.</title>
        <authorList>
            <person name="Janssen P.J."/>
            <person name="Van Houdt R."/>
            <person name="Moors H."/>
            <person name="Monsieurs P."/>
            <person name="Morin N."/>
            <person name="Michaux A."/>
            <person name="Benotmane M.A."/>
            <person name="Leys N."/>
            <person name="Vallaeys T."/>
            <person name="Lapidus A."/>
            <person name="Monchy S."/>
            <person name="Medigue C."/>
            <person name="Taghavi S."/>
            <person name="McCorkle S."/>
            <person name="Dunn J."/>
            <person name="van der Lelie D."/>
            <person name="Mergeay M."/>
        </authorList>
    </citation>
    <scope>NUCLEOTIDE SEQUENCE [LARGE SCALE GENOMIC DNA]</scope>
    <source>
        <strain>ATCC 43123 / DSM 2839 / NBRC 102507 / CH34</strain>
    </source>
</reference>
<comment type="function">
    <text evidence="1">Involved in the biosynthesis of branched-chain amino acids (BCAA). Catalyzes an alkyl-migration followed by a ketol-acid reduction of (S)-2-acetolactate (S2AL) to yield (R)-2,3-dihydroxy-isovalerate. In the isomerase reaction, S2AL is rearranged via a Mg-dependent methyl migration to produce 3-hydroxy-3-methyl-2-ketobutyrate (HMKB). In the reductase reaction, this 2-ketoacid undergoes a metal-dependent reduction by NADPH to yield (R)-2,3-dihydroxy-isovalerate.</text>
</comment>
<comment type="catalytic activity">
    <reaction evidence="1">
        <text>(2R)-2,3-dihydroxy-3-methylbutanoate + NADP(+) = (2S)-2-acetolactate + NADPH + H(+)</text>
        <dbReference type="Rhea" id="RHEA:22068"/>
        <dbReference type="ChEBI" id="CHEBI:15378"/>
        <dbReference type="ChEBI" id="CHEBI:49072"/>
        <dbReference type="ChEBI" id="CHEBI:57783"/>
        <dbReference type="ChEBI" id="CHEBI:58349"/>
        <dbReference type="ChEBI" id="CHEBI:58476"/>
        <dbReference type="EC" id="1.1.1.86"/>
    </reaction>
</comment>
<comment type="catalytic activity">
    <reaction evidence="1">
        <text>(2R,3R)-2,3-dihydroxy-3-methylpentanoate + NADP(+) = (S)-2-ethyl-2-hydroxy-3-oxobutanoate + NADPH + H(+)</text>
        <dbReference type="Rhea" id="RHEA:13493"/>
        <dbReference type="ChEBI" id="CHEBI:15378"/>
        <dbReference type="ChEBI" id="CHEBI:49256"/>
        <dbReference type="ChEBI" id="CHEBI:49258"/>
        <dbReference type="ChEBI" id="CHEBI:57783"/>
        <dbReference type="ChEBI" id="CHEBI:58349"/>
        <dbReference type="EC" id="1.1.1.86"/>
    </reaction>
</comment>
<comment type="cofactor">
    <cofactor evidence="1">
        <name>Mg(2+)</name>
        <dbReference type="ChEBI" id="CHEBI:18420"/>
    </cofactor>
    <text evidence="1">Binds 2 magnesium ions per subunit.</text>
</comment>
<comment type="pathway">
    <text evidence="1">Amino-acid biosynthesis; L-isoleucine biosynthesis; L-isoleucine from 2-oxobutanoate: step 2/4.</text>
</comment>
<comment type="pathway">
    <text evidence="1">Amino-acid biosynthesis; L-valine biosynthesis; L-valine from pyruvate: step 2/4.</text>
</comment>
<comment type="similarity">
    <text evidence="1">Belongs to the ketol-acid reductoisomerase family.</text>
</comment>
<accession>Q1LPX7</accession>
<feature type="chain" id="PRO_0000252775" description="Ketol-acid reductoisomerase (NADP(+))">
    <location>
        <begin position="1"/>
        <end position="338"/>
    </location>
</feature>
<feature type="domain" description="KARI N-terminal Rossmann" evidence="2">
    <location>
        <begin position="1"/>
        <end position="181"/>
    </location>
</feature>
<feature type="domain" description="KARI C-terminal knotted" evidence="3">
    <location>
        <begin position="182"/>
        <end position="327"/>
    </location>
</feature>
<feature type="active site" evidence="1">
    <location>
        <position position="107"/>
    </location>
</feature>
<feature type="binding site" evidence="1">
    <location>
        <begin position="24"/>
        <end position="27"/>
    </location>
    <ligand>
        <name>NADP(+)</name>
        <dbReference type="ChEBI" id="CHEBI:58349"/>
    </ligand>
</feature>
<feature type="binding site" evidence="1">
    <location>
        <position position="47"/>
    </location>
    <ligand>
        <name>NADP(+)</name>
        <dbReference type="ChEBI" id="CHEBI:58349"/>
    </ligand>
</feature>
<feature type="binding site" evidence="1">
    <location>
        <position position="52"/>
    </location>
    <ligand>
        <name>NADP(+)</name>
        <dbReference type="ChEBI" id="CHEBI:58349"/>
    </ligand>
</feature>
<feature type="binding site" evidence="1">
    <location>
        <position position="133"/>
    </location>
    <ligand>
        <name>NADP(+)</name>
        <dbReference type="ChEBI" id="CHEBI:58349"/>
    </ligand>
</feature>
<feature type="binding site" evidence="1">
    <location>
        <position position="190"/>
    </location>
    <ligand>
        <name>Mg(2+)</name>
        <dbReference type="ChEBI" id="CHEBI:18420"/>
        <label>1</label>
    </ligand>
</feature>
<feature type="binding site" evidence="1">
    <location>
        <position position="190"/>
    </location>
    <ligand>
        <name>Mg(2+)</name>
        <dbReference type="ChEBI" id="CHEBI:18420"/>
        <label>2</label>
    </ligand>
</feature>
<feature type="binding site" evidence="1">
    <location>
        <position position="194"/>
    </location>
    <ligand>
        <name>Mg(2+)</name>
        <dbReference type="ChEBI" id="CHEBI:18420"/>
        <label>1</label>
    </ligand>
</feature>
<feature type="binding site" evidence="1">
    <location>
        <position position="226"/>
    </location>
    <ligand>
        <name>Mg(2+)</name>
        <dbReference type="ChEBI" id="CHEBI:18420"/>
        <label>2</label>
    </ligand>
</feature>
<feature type="binding site" evidence="1">
    <location>
        <position position="230"/>
    </location>
    <ligand>
        <name>Mg(2+)</name>
        <dbReference type="ChEBI" id="CHEBI:18420"/>
        <label>2</label>
    </ligand>
</feature>
<feature type="binding site" evidence="1">
    <location>
        <position position="251"/>
    </location>
    <ligand>
        <name>substrate</name>
    </ligand>
</feature>
<name>ILVC_CUPMC</name>
<keyword id="KW-0028">Amino-acid biosynthesis</keyword>
<keyword id="KW-0100">Branched-chain amino acid biosynthesis</keyword>
<keyword id="KW-0460">Magnesium</keyword>
<keyword id="KW-0479">Metal-binding</keyword>
<keyword id="KW-0521">NADP</keyword>
<keyword id="KW-0560">Oxidoreductase</keyword>
<keyword id="KW-1185">Reference proteome</keyword>